<evidence type="ECO:0000250" key="1"/>
<evidence type="ECO:0000255" key="2">
    <source>
        <dbReference type="PROSITE-ProRule" id="PRU10114"/>
    </source>
</evidence>
<evidence type="ECO:0000305" key="3"/>
<sequence>YYTPDYDTKDTDILAAFRMTPQPGVPPEEAGAAGAAESSTGTWTTVWTDGLTSLDRYKGRCHDIEPVAGEVNQYIAYVAYPLDLFEEGSVTNMFTSIVGNVFGFKALRALRLEDLRIPPAYSKTFIGPPHGIQVERDKLNKYGRPLLGCTIKPKLGLSAKNYGRAVYECLRGGLDFTKDDENVNSQPFMRWRDRFLFVAEALFKAQAETGEIKGHYLNATAGTCEEMLKRAIFARELGAPIVMHDYLTGGFTANTSLAFYCRDNGLLLHIHRAMHAVIDRQRNHGIHFRVLAKALRMSGGDHIHAGTVVGKLEGEREVTLGFVDLLRDDYIEKDRSRGIYFTQDWVSMPGVLPVASGGIHVWHMPALTEIFGDDSVLQFGGGTLGHPWGNAPGAVANRVALEACVQARNE</sequence>
<name>RBL_GLEJA</name>
<reference key="1">
    <citation type="journal article" date="1994" name="Proc. Natl. Acad. Sci. U.S.A.">
        <title>rbcL gene sequences provide evidence for the evolutionary lineages of leptosporangiate ferns.</title>
        <authorList>
            <person name="Hasebe M."/>
            <person name="Omori T."/>
            <person name="Nakazawa M."/>
            <person name="Sano T."/>
            <person name="Kato M."/>
            <person name="Iwatsuki K."/>
        </authorList>
    </citation>
    <scope>NUCLEOTIDE SEQUENCE [GENOMIC DNA]</scope>
    <source>
        <tissue>Leaf</tissue>
    </source>
</reference>
<accession>P48705</accession>
<proteinExistence type="inferred from homology"/>
<protein>
    <recommendedName>
        <fullName>Ribulose bisphosphate carboxylase large chain</fullName>
        <shortName>RuBisCO large subunit</shortName>
        <ecNumber>4.1.1.39</ecNumber>
    </recommendedName>
</protein>
<organism>
    <name type="scientific">Gleichenia japonica</name>
    <name type="common">Urajiro</name>
    <name type="synonym">Fern</name>
    <dbReference type="NCBI Taxonomy" id="3274"/>
    <lineage>
        <taxon>Eukaryota</taxon>
        <taxon>Viridiplantae</taxon>
        <taxon>Streptophyta</taxon>
        <taxon>Embryophyta</taxon>
        <taxon>Tracheophyta</taxon>
        <taxon>Polypodiopsida</taxon>
        <taxon>Polypodiidae</taxon>
        <taxon>Gleicheniales</taxon>
        <taxon>Gleicheniaceae</taxon>
        <taxon>Gleichenia</taxon>
    </lineage>
</organism>
<gene>
    <name type="primary">rbcL</name>
</gene>
<dbReference type="EC" id="4.1.1.39"/>
<dbReference type="EMBL" id="U05624">
    <property type="protein sequence ID" value="AAA67187.1"/>
    <property type="molecule type" value="Genomic_DNA"/>
</dbReference>
<dbReference type="SMR" id="P48705"/>
<dbReference type="GO" id="GO:0009507">
    <property type="term" value="C:chloroplast"/>
    <property type="evidence" value="ECO:0007669"/>
    <property type="project" value="UniProtKB-SubCell"/>
</dbReference>
<dbReference type="GO" id="GO:0000287">
    <property type="term" value="F:magnesium ion binding"/>
    <property type="evidence" value="ECO:0007669"/>
    <property type="project" value="InterPro"/>
</dbReference>
<dbReference type="GO" id="GO:0004497">
    <property type="term" value="F:monooxygenase activity"/>
    <property type="evidence" value="ECO:0007669"/>
    <property type="project" value="UniProtKB-KW"/>
</dbReference>
<dbReference type="GO" id="GO:0016984">
    <property type="term" value="F:ribulose-bisphosphate carboxylase activity"/>
    <property type="evidence" value="ECO:0007669"/>
    <property type="project" value="UniProtKB-EC"/>
</dbReference>
<dbReference type="GO" id="GO:0009853">
    <property type="term" value="P:photorespiration"/>
    <property type="evidence" value="ECO:0007669"/>
    <property type="project" value="UniProtKB-KW"/>
</dbReference>
<dbReference type="GO" id="GO:0019253">
    <property type="term" value="P:reductive pentose-phosphate cycle"/>
    <property type="evidence" value="ECO:0007669"/>
    <property type="project" value="UniProtKB-KW"/>
</dbReference>
<dbReference type="FunFam" id="3.20.20.110:FF:000003">
    <property type="entry name" value="Ribulose bisphosphate carboxylase large chain"/>
    <property type="match status" value="1"/>
</dbReference>
<dbReference type="Gene3D" id="3.20.20.110">
    <property type="entry name" value="Ribulose bisphosphate carboxylase, large subunit, C-terminal domain"/>
    <property type="match status" value="1"/>
</dbReference>
<dbReference type="Gene3D" id="3.30.70.150">
    <property type="entry name" value="RuBisCO large subunit, N-terminal domain"/>
    <property type="match status" value="1"/>
</dbReference>
<dbReference type="InterPro" id="IPR033966">
    <property type="entry name" value="RuBisCO"/>
</dbReference>
<dbReference type="InterPro" id="IPR020878">
    <property type="entry name" value="RuBisCo_large_chain_AS"/>
</dbReference>
<dbReference type="InterPro" id="IPR000685">
    <property type="entry name" value="RuBisCO_lsu_C"/>
</dbReference>
<dbReference type="InterPro" id="IPR036376">
    <property type="entry name" value="RuBisCO_lsu_C_sf"/>
</dbReference>
<dbReference type="InterPro" id="IPR017443">
    <property type="entry name" value="RuBisCO_lsu_fd_N"/>
</dbReference>
<dbReference type="InterPro" id="IPR036422">
    <property type="entry name" value="RuBisCO_lsu_N_sf"/>
</dbReference>
<dbReference type="NCBIfam" id="NF003252">
    <property type="entry name" value="PRK04208.1"/>
    <property type="match status" value="1"/>
</dbReference>
<dbReference type="PANTHER" id="PTHR42704">
    <property type="entry name" value="RIBULOSE BISPHOSPHATE CARBOXYLASE"/>
    <property type="match status" value="1"/>
</dbReference>
<dbReference type="PANTHER" id="PTHR42704:SF17">
    <property type="entry name" value="RIBULOSE BISPHOSPHATE CARBOXYLASE LARGE CHAIN"/>
    <property type="match status" value="1"/>
</dbReference>
<dbReference type="Pfam" id="PF00016">
    <property type="entry name" value="RuBisCO_large"/>
    <property type="match status" value="1"/>
</dbReference>
<dbReference type="Pfam" id="PF02788">
    <property type="entry name" value="RuBisCO_large_N"/>
    <property type="match status" value="1"/>
</dbReference>
<dbReference type="SFLD" id="SFLDG01052">
    <property type="entry name" value="RuBisCO"/>
    <property type="match status" value="1"/>
</dbReference>
<dbReference type="SFLD" id="SFLDS00014">
    <property type="entry name" value="RuBisCO"/>
    <property type="match status" value="1"/>
</dbReference>
<dbReference type="SFLD" id="SFLDG00301">
    <property type="entry name" value="RuBisCO-like_proteins"/>
    <property type="match status" value="1"/>
</dbReference>
<dbReference type="SUPFAM" id="SSF51649">
    <property type="entry name" value="RuBisCo, C-terminal domain"/>
    <property type="match status" value="1"/>
</dbReference>
<dbReference type="SUPFAM" id="SSF54966">
    <property type="entry name" value="RuBisCO, large subunit, small (N-terminal) domain"/>
    <property type="match status" value="1"/>
</dbReference>
<dbReference type="PROSITE" id="PS00157">
    <property type="entry name" value="RUBISCO_LARGE"/>
    <property type="match status" value="1"/>
</dbReference>
<feature type="chain" id="PRO_0000062482" description="Ribulose bisphosphate carboxylase large chain">
    <location>
        <begin position="1" status="less than"/>
        <end position="410" status="greater than"/>
    </location>
</feature>
<feature type="active site" description="Proton acceptor" evidence="1">
    <location>
        <position position="152"/>
    </location>
</feature>
<feature type="active site" description="Proton acceptor" evidence="1">
    <location>
        <position position="271"/>
    </location>
</feature>
<feature type="binding site" description="in homodimeric partner" evidence="1">
    <location>
        <position position="100"/>
    </location>
    <ligand>
        <name>substrate</name>
    </ligand>
</feature>
<feature type="binding site" evidence="1">
    <location>
        <position position="150"/>
    </location>
    <ligand>
        <name>substrate</name>
    </ligand>
</feature>
<feature type="binding site" evidence="1">
    <location>
        <position position="154"/>
    </location>
    <ligand>
        <name>substrate</name>
    </ligand>
</feature>
<feature type="binding site" description="via carbamate group" evidence="2">
    <location>
        <position position="178"/>
    </location>
    <ligand>
        <name>Mg(2+)</name>
        <dbReference type="ChEBI" id="CHEBI:18420"/>
    </ligand>
</feature>
<feature type="binding site" evidence="2">
    <location>
        <position position="180"/>
    </location>
    <ligand>
        <name>Mg(2+)</name>
        <dbReference type="ChEBI" id="CHEBI:18420"/>
    </ligand>
</feature>
<feature type="binding site" evidence="2">
    <location>
        <position position="181"/>
    </location>
    <ligand>
        <name>Mg(2+)</name>
        <dbReference type="ChEBI" id="CHEBI:18420"/>
    </ligand>
</feature>
<feature type="binding site" evidence="1">
    <location>
        <position position="272"/>
    </location>
    <ligand>
        <name>substrate</name>
    </ligand>
</feature>
<feature type="binding site" evidence="1">
    <location>
        <position position="304"/>
    </location>
    <ligand>
        <name>substrate</name>
    </ligand>
</feature>
<feature type="binding site" evidence="1">
    <location>
        <position position="356"/>
    </location>
    <ligand>
        <name>substrate</name>
    </ligand>
</feature>
<feature type="site" description="Transition state stabilizer" evidence="1">
    <location>
        <position position="311"/>
    </location>
</feature>
<feature type="modified residue" description="N6-carboxylysine" evidence="2">
    <location>
        <position position="178"/>
    </location>
</feature>
<feature type="disulfide bond" description="Interchain; in linked form" evidence="1">
    <location>
        <position position="224"/>
    </location>
</feature>
<feature type="non-terminal residue">
    <location>
        <position position="1"/>
    </location>
</feature>
<feature type="non-terminal residue">
    <location>
        <position position="410"/>
    </location>
</feature>
<keyword id="KW-0113">Calvin cycle</keyword>
<keyword id="KW-0120">Carbon dioxide fixation</keyword>
<keyword id="KW-0150">Chloroplast</keyword>
<keyword id="KW-1015">Disulfide bond</keyword>
<keyword id="KW-0456">Lyase</keyword>
<keyword id="KW-0460">Magnesium</keyword>
<keyword id="KW-0479">Metal-binding</keyword>
<keyword id="KW-0503">Monooxygenase</keyword>
<keyword id="KW-0560">Oxidoreductase</keyword>
<keyword id="KW-0601">Photorespiration</keyword>
<keyword id="KW-0602">Photosynthesis</keyword>
<keyword id="KW-0934">Plastid</keyword>
<comment type="function">
    <text evidence="1">RuBisCO catalyzes two reactions: the carboxylation of D-ribulose 1,5-bisphosphate, the primary event in carbon dioxide fixation, as well as the oxidative fragmentation of the pentose substrate in the photorespiration process. Both reactions occur simultaneously and in competition at the same active site (By similarity).</text>
</comment>
<comment type="catalytic activity">
    <reaction>
        <text>2 (2R)-3-phosphoglycerate + 2 H(+) = D-ribulose 1,5-bisphosphate + CO2 + H2O</text>
        <dbReference type="Rhea" id="RHEA:23124"/>
        <dbReference type="ChEBI" id="CHEBI:15377"/>
        <dbReference type="ChEBI" id="CHEBI:15378"/>
        <dbReference type="ChEBI" id="CHEBI:16526"/>
        <dbReference type="ChEBI" id="CHEBI:57870"/>
        <dbReference type="ChEBI" id="CHEBI:58272"/>
        <dbReference type="EC" id="4.1.1.39"/>
    </reaction>
</comment>
<comment type="catalytic activity">
    <reaction>
        <text>D-ribulose 1,5-bisphosphate + O2 = 2-phosphoglycolate + (2R)-3-phosphoglycerate + 2 H(+)</text>
        <dbReference type="Rhea" id="RHEA:36631"/>
        <dbReference type="ChEBI" id="CHEBI:15378"/>
        <dbReference type="ChEBI" id="CHEBI:15379"/>
        <dbReference type="ChEBI" id="CHEBI:57870"/>
        <dbReference type="ChEBI" id="CHEBI:58033"/>
        <dbReference type="ChEBI" id="CHEBI:58272"/>
    </reaction>
</comment>
<comment type="cofactor">
    <cofactor evidence="1">
        <name>Mg(2+)</name>
        <dbReference type="ChEBI" id="CHEBI:18420"/>
    </cofactor>
    <text evidence="1">Binds 1 Mg(2+) ion per subunit.</text>
</comment>
<comment type="subunit">
    <text evidence="1">Heterohexadecamer of 8 large chains and 8 small chains; disulfide-linked. The disulfide link is formed within the large subunit homodimers (By similarity).</text>
</comment>
<comment type="subcellular location">
    <subcellularLocation>
        <location>Plastid</location>
        <location>Chloroplast</location>
    </subcellularLocation>
</comment>
<comment type="PTM">
    <text evidence="1">The disulfide bond which can form in the large chain dimeric partners within the hexadecamer appears to be associated with oxidative stress and protein turnover.</text>
</comment>
<comment type="miscellaneous">
    <text evidence="1">The basic functional RuBisCO is composed of a large chain homodimer in a 'head-to-tail' conformation. In form I RuBisCO this homodimer is arranged in a barrel-like tetramer with the small subunits forming a tetrameric 'cap' on each end of the 'barrel' (By similarity).</text>
</comment>
<comment type="similarity">
    <text evidence="3">Belongs to the RuBisCO large chain family. Type I subfamily.</text>
</comment>
<geneLocation type="chloroplast"/>